<organism>
    <name type="scientific">Balaenoptera borealis</name>
    <name type="common">Sei whale</name>
    <name type="synonym">Pollack whale</name>
    <dbReference type="NCBI Taxonomy" id="9768"/>
    <lineage>
        <taxon>Eukaryota</taxon>
        <taxon>Metazoa</taxon>
        <taxon>Chordata</taxon>
        <taxon>Craniata</taxon>
        <taxon>Vertebrata</taxon>
        <taxon>Euteleostomi</taxon>
        <taxon>Mammalia</taxon>
        <taxon>Eutheria</taxon>
        <taxon>Laurasiatheria</taxon>
        <taxon>Artiodactyla</taxon>
        <taxon>Whippomorpha</taxon>
        <taxon>Cetacea</taxon>
        <taxon>Mysticeti</taxon>
        <taxon>Balaenopteridae</taxon>
        <taxon>Balaenoptera</taxon>
    </lineage>
</organism>
<accession>P33092</accession>
<name>SOMA_BALBO</name>
<comment type="function">
    <text>Plays an important role in growth control. Its major role in stimulating body growth is to stimulate the liver and other tissues to secrete IGF1. It stimulates both the differentiation and proliferation of myoblasts. It also stimulates amino acid uptake and protein synthesis in muscle and other tissues.</text>
</comment>
<comment type="subcellular location">
    <subcellularLocation>
        <location>Secreted</location>
    </subcellularLocation>
</comment>
<comment type="similarity">
    <text evidence="3">Belongs to the somatotropin/prolactin family.</text>
</comment>
<evidence type="ECO:0000250" key="1"/>
<evidence type="ECO:0000250" key="2">
    <source>
        <dbReference type="UniProtKB" id="P01241"/>
    </source>
</evidence>
<evidence type="ECO:0000305" key="3"/>
<reference key="1">
    <citation type="journal article" date="1982" name="Biokhimiia">
        <title>Amino acid sequence of seiwhale somatotropin.</title>
        <authorList>
            <person name="Yudaev N.A."/>
            <person name="Pankov Y.A."/>
            <person name="Bulatov A.A."/>
            <person name="Osipova T.A."/>
        </authorList>
    </citation>
    <scope>PROTEIN SEQUENCE</scope>
</reference>
<reference key="2">
    <citation type="journal article" date="1978" name="Bioorg. Khim.">
        <title>Structural studies of tryptic peptides from large cyanogen bromide fragments of sei whale (Balalnoptera borealis) somatotropin.</title>
        <authorList>
            <person name="Osipova T.A."/>
            <person name="Bulatov A.A."/>
            <person name="Pankov Y.A."/>
        </authorList>
    </citation>
    <scope>PRELIMINARY PARTIAL PROTEIN SEQUENCE</scope>
</reference>
<dbReference type="PIR" id="JN0387">
    <property type="entry name" value="JN0387"/>
</dbReference>
<dbReference type="PIR" id="PN0140">
    <property type="entry name" value="PN0140"/>
</dbReference>
<dbReference type="SMR" id="P33092"/>
<dbReference type="GO" id="GO:0005615">
    <property type="term" value="C:extracellular space"/>
    <property type="evidence" value="ECO:0007669"/>
    <property type="project" value="InterPro"/>
</dbReference>
<dbReference type="GO" id="GO:0008083">
    <property type="term" value="F:growth factor activity"/>
    <property type="evidence" value="ECO:0007669"/>
    <property type="project" value="TreeGrafter"/>
</dbReference>
<dbReference type="GO" id="GO:0005131">
    <property type="term" value="F:growth hormone receptor binding"/>
    <property type="evidence" value="ECO:0007669"/>
    <property type="project" value="InterPro"/>
</dbReference>
<dbReference type="GO" id="GO:0005179">
    <property type="term" value="F:hormone activity"/>
    <property type="evidence" value="ECO:0007669"/>
    <property type="project" value="UniProtKB-KW"/>
</dbReference>
<dbReference type="GO" id="GO:0046872">
    <property type="term" value="F:metal ion binding"/>
    <property type="evidence" value="ECO:0007669"/>
    <property type="project" value="UniProtKB-KW"/>
</dbReference>
<dbReference type="GO" id="GO:0048513">
    <property type="term" value="P:animal organ development"/>
    <property type="evidence" value="ECO:0007669"/>
    <property type="project" value="TreeGrafter"/>
</dbReference>
<dbReference type="GO" id="GO:0060396">
    <property type="term" value="P:growth hormone receptor signaling pathway"/>
    <property type="evidence" value="ECO:0007669"/>
    <property type="project" value="TreeGrafter"/>
</dbReference>
<dbReference type="GO" id="GO:0045927">
    <property type="term" value="P:positive regulation of growth"/>
    <property type="evidence" value="ECO:0007669"/>
    <property type="project" value="TreeGrafter"/>
</dbReference>
<dbReference type="GO" id="GO:0046427">
    <property type="term" value="P:positive regulation of receptor signaling pathway via JAK-STAT"/>
    <property type="evidence" value="ECO:0007669"/>
    <property type="project" value="TreeGrafter"/>
</dbReference>
<dbReference type="GO" id="GO:0031667">
    <property type="term" value="P:response to nutrient levels"/>
    <property type="evidence" value="ECO:0007669"/>
    <property type="project" value="TreeGrafter"/>
</dbReference>
<dbReference type="CDD" id="cd10285">
    <property type="entry name" value="somatotropin_like"/>
    <property type="match status" value="1"/>
</dbReference>
<dbReference type="FunFam" id="1.20.1250.10:FF:000002">
    <property type="entry name" value="Growth hormone"/>
    <property type="match status" value="1"/>
</dbReference>
<dbReference type="Gene3D" id="1.20.1250.10">
    <property type="match status" value="1"/>
</dbReference>
<dbReference type="InterPro" id="IPR009079">
    <property type="entry name" value="4_helix_cytokine-like_core"/>
</dbReference>
<dbReference type="InterPro" id="IPR034975">
    <property type="entry name" value="Somatotropin"/>
</dbReference>
<dbReference type="InterPro" id="IPR001400">
    <property type="entry name" value="Somatotropin/Prolactin"/>
</dbReference>
<dbReference type="InterPro" id="IPR018116">
    <property type="entry name" value="Somatotropin_CS"/>
</dbReference>
<dbReference type="PANTHER" id="PTHR11417:SF2">
    <property type="entry name" value="SOMATOTROPIN"/>
    <property type="match status" value="1"/>
</dbReference>
<dbReference type="PANTHER" id="PTHR11417">
    <property type="entry name" value="SOMATOTROPIN,PROLACTIN"/>
    <property type="match status" value="1"/>
</dbReference>
<dbReference type="Pfam" id="PF00103">
    <property type="entry name" value="Hormone_1"/>
    <property type="match status" value="1"/>
</dbReference>
<dbReference type="PRINTS" id="PR00836">
    <property type="entry name" value="SOMATOTROPIN"/>
</dbReference>
<dbReference type="SUPFAM" id="SSF47266">
    <property type="entry name" value="4-helical cytokines"/>
    <property type="match status" value="1"/>
</dbReference>
<dbReference type="PROSITE" id="PS00266">
    <property type="entry name" value="SOMATOTROPIN_1"/>
    <property type="match status" value="1"/>
</dbReference>
<dbReference type="PROSITE" id="PS00338">
    <property type="entry name" value="SOMATOTROPIN_2"/>
    <property type="match status" value="1"/>
</dbReference>
<feature type="chain" id="PRO_0000181328" description="Somatotropin">
    <location>
        <begin position="1"/>
        <end position="190"/>
    </location>
</feature>
<feature type="binding site" evidence="1">
    <location>
        <position position="19"/>
    </location>
    <ligand>
        <name>Zn(2+)</name>
        <dbReference type="ChEBI" id="CHEBI:29105"/>
    </ligand>
</feature>
<feature type="binding site" evidence="1">
    <location>
        <position position="172"/>
    </location>
    <ligand>
        <name>Zn(2+)</name>
        <dbReference type="ChEBI" id="CHEBI:29105"/>
    </ligand>
</feature>
<feature type="modified residue" description="Phosphoserine" evidence="2">
    <location>
        <position position="105"/>
    </location>
</feature>
<feature type="disulfide bond" evidence="1">
    <location>
        <begin position="52"/>
        <end position="163"/>
    </location>
</feature>
<feature type="disulfide bond" evidence="1">
    <location>
        <begin position="180"/>
        <end position="188"/>
    </location>
</feature>
<sequence>FPAMPLSSLFANAVLRAQHLHELAADTYKEFERAYIPEGQRYFLQNAQSTGCFSEVIPTPANKDEAQQRSDVELLRFSLLLIQSWLGPVQFLEKAYANELVFGTSDRVYEKLKDLEEGIQALMRELEDGSPRAGQILKQTYDKFDTNMRSDDALLKNYGLLSCFKKDLHKAETYLRVMKCRRFVESSCAF</sequence>
<protein>
    <recommendedName>
        <fullName>Somatotropin</fullName>
    </recommendedName>
    <alternativeName>
        <fullName>Growth hormone</fullName>
    </alternativeName>
</protein>
<keyword id="KW-0903">Direct protein sequencing</keyword>
<keyword id="KW-1015">Disulfide bond</keyword>
<keyword id="KW-0372">Hormone</keyword>
<keyword id="KW-0479">Metal-binding</keyword>
<keyword id="KW-0597">Phosphoprotein</keyword>
<keyword id="KW-0964">Secreted</keyword>
<keyword id="KW-0862">Zinc</keyword>
<proteinExistence type="evidence at protein level"/>
<gene>
    <name type="primary">GH1</name>
</gene>